<evidence type="ECO:0000250" key="1"/>
<evidence type="ECO:0000255" key="2"/>
<evidence type="ECO:0000269" key="3">
    <source>
    </source>
</evidence>
<evidence type="ECO:0000269" key="4">
    <source>
    </source>
</evidence>
<evidence type="ECO:0000269" key="5">
    <source>
    </source>
</evidence>
<evidence type="ECO:0000305" key="6"/>
<gene>
    <name type="primary">Gr28a</name>
    <name type="ORF">CG13787</name>
</gene>
<organism>
    <name type="scientific">Drosophila melanogaster</name>
    <name type="common">Fruit fly</name>
    <dbReference type="NCBI Taxonomy" id="7227"/>
    <lineage>
        <taxon>Eukaryota</taxon>
        <taxon>Metazoa</taxon>
        <taxon>Ecdysozoa</taxon>
        <taxon>Arthropoda</taxon>
        <taxon>Hexapoda</taxon>
        <taxon>Insecta</taxon>
        <taxon>Pterygota</taxon>
        <taxon>Neoptera</taxon>
        <taxon>Endopterygota</taxon>
        <taxon>Diptera</taxon>
        <taxon>Brachycera</taxon>
        <taxon>Muscomorpha</taxon>
        <taxon>Ephydroidea</taxon>
        <taxon>Drosophilidae</taxon>
        <taxon>Drosophila</taxon>
        <taxon>Sophophora</taxon>
    </lineage>
</organism>
<accession>Q9VM09</accession>
<sequence>MAFKLWERFSQADNVFQALRPLTFISLLGLAPFRLNLNPRKEVQTSKFSFFAGIVHFLFFVLCFGISVKEGDSIIGYFFQTNITRFSDGTLRLTGILAMSTIFGFAMFKRQRLVSIIQNNIVVDEIFVRLGMKLDYRRILLSSFLISLGMLLFNVIYLCVSYSLLVSATISPSFVTFTTFALPHINISLMVFKFLCTTDLARSRFSMLNEILQDILDAHIEQLSALELSPMHSVVNHRRYSHRLRNLISTPMKRYSVTSVIRLNPEYAIKQVSNIHNLLCDICQTIEEYFTYPLLGIIAISFLFILFDDFYILEAILNPKRLDVFEADEFFAFFLMQLIWYIVIIVLIVEGSSRTILHSSYTAAIVHKILNITDDPELRDRLFRLSLQLSHRKVLFTAAGLFRLDRTLIFTITGAATCYLIILIQFRFTHHMDDTSSNSTNNLHSIHLGD</sequence>
<protein>
    <recommendedName>
        <fullName>Putative gustatory receptor 28a</fullName>
    </recommendedName>
</protein>
<name>GR28A_DROME</name>
<comment type="function">
    <text evidence="1 3">Probable gustatory receptor which mediates acceptance or avoidance behavior, depending on its substrates (By similarity). Atypical expression also suggests nongustatory roles in the nervous system and tissues involved in proprioception, hygroreception, and other sensory modalities. It is also possible that it has chemosensory roles in the detection of internal ligands.</text>
</comment>
<comment type="subcellular location">
    <subcellularLocation>
        <location evidence="1">Cell membrane</location>
        <topology evidence="1">Multi-pass membrane protein</topology>
    </subcellularLocation>
</comment>
<comment type="tissue specificity">
    <text evidence="3 4 5">In addition to expression in a large number of taste neurons, Gr28a is also expressed in a few nonchemosensory neurons, including the campaniform sensilla of the wing, leg stretch receptors, and multiple dendritic (MD) neurons in the abdomen. In larvea, is expressed in neurons of the terminal external chemosensory organ, the dorsal external chemosensory organ, as well as in the ventral and posterior pharyngeal sense organ.</text>
</comment>
<comment type="similarity">
    <text evidence="6">Belongs to the insect chemoreceptor superfamily. Gustatory receptor (GR) family. Gr2a subfamily.</text>
</comment>
<proteinExistence type="evidence at transcript level"/>
<dbReference type="EMBL" id="AE014134">
    <property type="protein sequence ID" value="AAF52519.2"/>
    <property type="molecule type" value="Genomic_DNA"/>
</dbReference>
<dbReference type="RefSeq" id="NP_523504.2">
    <property type="nucleotide sequence ID" value="NM_078780.5"/>
</dbReference>
<dbReference type="SMR" id="Q9VM09"/>
<dbReference type="BioGRID" id="72880">
    <property type="interactions" value="1"/>
</dbReference>
<dbReference type="FunCoup" id="Q9VM09">
    <property type="interactions" value="15"/>
</dbReference>
<dbReference type="STRING" id="7227.FBpp0079087"/>
<dbReference type="GlyCosmos" id="Q9VM09">
    <property type="glycosylation" value="2 sites, No reported glycans"/>
</dbReference>
<dbReference type="GlyGen" id="Q9VM09">
    <property type="glycosylation" value="2 sites"/>
</dbReference>
<dbReference type="PaxDb" id="7227-FBpp0079087"/>
<dbReference type="EnsemblMetazoa" id="FBtr0079463">
    <property type="protein sequence ID" value="FBpp0079087"/>
    <property type="gene ID" value="FBgn0041247"/>
</dbReference>
<dbReference type="GeneID" id="117348"/>
<dbReference type="KEGG" id="dme:Dmel_CG13787"/>
<dbReference type="AGR" id="FB:FBgn0041247"/>
<dbReference type="CTD" id="117348"/>
<dbReference type="FlyBase" id="FBgn0041247">
    <property type="gene designation" value="Gr28a"/>
</dbReference>
<dbReference type="VEuPathDB" id="VectorBase:FBgn0041247"/>
<dbReference type="eggNOG" id="ENOG502S2QD">
    <property type="taxonomic scope" value="Eukaryota"/>
</dbReference>
<dbReference type="GeneTree" id="ENSGT00940000166130"/>
<dbReference type="HOGENOM" id="CLU_029071_0_0_1"/>
<dbReference type="InParanoid" id="Q9VM09"/>
<dbReference type="OMA" id="TMRAVKQ"/>
<dbReference type="OrthoDB" id="6366728at2759"/>
<dbReference type="PhylomeDB" id="Q9VM09"/>
<dbReference type="BioGRID-ORCS" id="117348">
    <property type="hits" value="0 hits in 1 CRISPR screen"/>
</dbReference>
<dbReference type="GenomeRNAi" id="117348"/>
<dbReference type="PRO" id="PR:Q9VM09"/>
<dbReference type="Proteomes" id="UP000000803">
    <property type="component" value="Chromosome 2L"/>
</dbReference>
<dbReference type="GO" id="GO:0030424">
    <property type="term" value="C:axon"/>
    <property type="evidence" value="ECO:0000318"/>
    <property type="project" value="GO_Central"/>
</dbReference>
<dbReference type="GO" id="GO:0030425">
    <property type="term" value="C:dendrite"/>
    <property type="evidence" value="ECO:0000318"/>
    <property type="project" value="GO_Central"/>
</dbReference>
<dbReference type="GO" id="GO:0016020">
    <property type="term" value="C:membrane"/>
    <property type="evidence" value="ECO:0000303"/>
    <property type="project" value="UniProtKB"/>
</dbReference>
<dbReference type="GO" id="GO:0043025">
    <property type="term" value="C:neuronal cell body"/>
    <property type="evidence" value="ECO:0000318"/>
    <property type="project" value="GO_Central"/>
</dbReference>
<dbReference type="GO" id="GO:0005886">
    <property type="term" value="C:plasma membrane"/>
    <property type="evidence" value="ECO:0000250"/>
    <property type="project" value="FlyBase"/>
</dbReference>
<dbReference type="GO" id="GO:0015276">
    <property type="term" value="F:ligand-gated monoatomic ion channel activity"/>
    <property type="evidence" value="ECO:0000250"/>
    <property type="project" value="FlyBase"/>
</dbReference>
<dbReference type="GO" id="GO:0008527">
    <property type="term" value="F:taste receptor activity"/>
    <property type="evidence" value="ECO:0000303"/>
    <property type="project" value="UniProtKB"/>
</dbReference>
<dbReference type="GO" id="GO:0007635">
    <property type="term" value="P:chemosensory behavior"/>
    <property type="evidence" value="ECO:0000318"/>
    <property type="project" value="GO_Central"/>
</dbReference>
<dbReference type="GO" id="GO:0008049">
    <property type="term" value="P:male courtship behavior"/>
    <property type="evidence" value="ECO:0000318"/>
    <property type="project" value="GO_Central"/>
</dbReference>
<dbReference type="GO" id="GO:0034220">
    <property type="term" value="P:monoatomic ion transmembrane transport"/>
    <property type="evidence" value="ECO:0000250"/>
    <property type="project" value="FlyBase"/>
</dbReference>
<dbReference type="GO" id="GO:0050909">
    <property type="term" value="P:sensory perception of taste"/>
    <property type="evidence" value="ECO:0000303"/>
    <property type="project" value="UniProtKB"/>
</dbReference>
<dbReference type="GO" id="GO:0007165">
    <property type="term" value="P:signal transduction"/>
    <property type="evidence" value="ECO:0007669"/>
    <property type="project" value="UniProtKB-KW"/>
</dbReference>
<dbReference type="InterPro" id="IPR013604">
    <property type="entry name" value="7TM_chemorcpt"/>
</dbReference>
<dbReference type="PANTHER" id="PTHR21143:SF104">
    <property type="entry name" value="GUSTATORY RECEPTOR 8A-RELATED"/>
    <property type="match status" value="1"/>
</dbReference>
<dbReference type="PANTHER" id="PTHR21143">
    <property type="entry name" value="INVERTEBRATE GUSTATORY RECEPTOR"/>
    <property type="match status" value="1"/>
</dbReference>
<dbReference type="Pfam" id="PF08395">
    <property type="entry name" value="7tm_7"/>
    <property type="match status" value="1"/>
</dbReference>
<reference key="1">
    <citation type="journal article" date="2000" name="Science">
        <title>The genome sequence of Drosophila melanogaster.</title>
        <authorList>
            <person name="Adams M.D."/>
            <person name="Celniker S.E."/>
            <person name="Holt R.A."/>
            <person name="Evans C.A."/>
            <person name="Gocayne J.D."/>
            <person name="Amanatides P.G."/>
            <person name="Scherer S.E."/>
            <person name="Li P.W."/>
            <person name="Hoskins R.A."/>
            <person name="Galle R.F."/>
            <person name="George R.A."/>
            <person name="Lewis S.E."/>
            <person name="Richards S."/>
            <person name="Ashburner M."/>
            <person name="Henderson S.N."/>
            <person name="Sutton G.G."/>
            <person name="Wortman J.R."/>
            <person name="Yandell M.D."/>
            <person name="Zhang Q."/>
            <person name="Chen L.X."/>
            <person name="Brandon R.C."/>
            <person name="Rogers Y.-H.C."/>
            <person name="Blazej R.G."/>
            <person name="Champe M."/>
            <person name="Pfeiffer B.D."/>
            <person name="Wan K.H."/>
            <person name="Doyle C."/>
            <person name="Baxter E.G."/>
            <person name="Helt G."/>
            <person name="Nelson C.R."/>
            <person name="Miklos G.L.G."/>
            <person name="Abril J.F."/>
            <person name="Agbayani A."/>
            <person name="An H.-J."/>
            <person name="Andrews-Pfannkoch C."/>
            <person name="Baldwin D."/>
            <person name="Ballew R.M."/>
            <person name="Basu A."/>
            <person name="Baxendale J."/>
            <person name="Bayraktaroglu L."/>
            <person name="Beasley E.M."/>
            <person name="Beeson K.Y."/>
            <person name="Benos P.V."/>
            <person name="Berman B.P."/>
            <person name="Bhandari D."/>
            <person name="Bolshakov S."/>
            <person name="Borkova D."/>
            <person name="Botchan M.R."/>
            <person name="Bouck J."/>
            <person name="Brokstein P."/>
            <person name="Brottier P."/>
            <person name="Burtis K.C."/>
            <person name="Busam D.A."/>
            <person name="Butler H."/>
            <person name="Cadieu E."/>
            <person name="Center A."/>
            <person name="Chandra I."/>
            <person name="Cherry J.M."/>
            <person name="Cawley S."/>
            <person name="Dahlke C."/>
            <person name="Davenport L.B."/>
            <person name="Davies P."/>
            <person name="de Pablos B."/>
            <person name="Delcher A."/>
            <person name="Deng Z."/>
            <person name="Mays A.D."/>
            <person name="Dew I."/>
            <person name="Dietz S.M."/>
            <person name="Dodson K."/>
            <person name="Doup L.E."/>
            <person name="Downes M."/>
            <person name="Dugan-Rocha S."/>
            <person name="Dunkov B.C."/>
            <person name="Dunn P."/>
            <person name="Durbin K.J."/>
            <person name="Evangelista C.C."/>
            <person name="Ferraz C."/>
            <person name="Ferriera S."/>
            <person name="Fleischmann W."/>
            <person name="Fosler C."/>
            <person name="Gabrielian A.E."/>
            <person name="Garg N.S."/>
            <person name="Gelbart W.M."/>
            <person name="Glasser K."/>
            <person name="Glodek A."/>
            <person name="Gong F."/>
            <person name="Gorrell J.H."/>
            <person name="Gu Z."/>
            <person name="Guan P."/>
            <person name="Harris M."/>
            <person name="Harris N.L."/>
            <person name="Harvey D.A."/>
            <person name="Heiman T.J."/>
            <person name="Hernandez J.R."/>
            <person name="Houck J."/>
            <person name="Hostin D."/>
            <person name="Houston K.A."/>
            <person name="Howland T.J."/>
            <person name="Wei M.-H."/>
            <person name="Ibegwam C."/>
            <person name="Jalali M."/>
            <person name="Kalush F."/>
            <person name="Karpen G.H."/>
            <person name="Ke Z."/>
            <person name="Kennison J.A."/>
            <person name="Ketchum K.A."/>
            <person name="Kimmel B.E."/>
            <person name="Kodira C.D."/>
            <person name="Kraft C.L."/>
            <person name="Kravitz S."/>
            <person name="Kulp D."/>
            <person name="Lai Z."/>
            <person name="Lasko P."/>
            <person name="Lei Y."/>
            <person name="Levitsky A.A."/>
            <person name="Li J.H."/>
            <person name="Li Z."/>
            <person name="Liang Y."/>
            <person name="Lin X."/>
            <person name="Liu X."/>
            <person name="Mattei B."/>
            <person name="McIntosh T.C."/>
            <person name="McLeod M.P."/>
            <person name="McPherson D."/>
            <person name="Merkulov G."/>
            <person name="Milshina N.V."/>
            <person name="Mobarry C."/>
            <person name="Morris J."/>
            <person name="Moshrefi A."/>
            <person name="Mount S.M."/>
            <person name="Moy M."/>
            <person name="Murphy B."/>
            <person name="Murphy L."/>
            <person name="Muzny D.M."/>
            <person name="Nelson D.L."/>
            <person name="Nelson D.R."/>
            <person name="Nelson K.A."/>
            <person name="Nixon K."/>
            <person name="Nusskern D.R."/>
            <person name="Pacleb J.M."/>
            <person name="Palazzolo M."/>
            <person name="Pittman G.S."/>
            <person name="Pan S."/>
            <person name="Pollard J."/>
            <person name="Puri V."/>
            <person name="Reese M.G."/>
            <person name="Reinert K."/>
            <person name="Remington K."/>
            <person name="Saunders R.D.C."/>
            <person name="Scheeler F."/>
            <person name="Shen H."/>
            <person name="Shue B.C."/>
            <person name="Siden-Kiamos I."/>
            <person name="Simpson M."/>
            <person name="Skupski M.P."/>
            <person name="Smith T.J."/>
            <person name="Spier E."/>
            <person name="Spradling A.C."/>
            <person name="Stapleton M."/>
            <person name="Strong R."/>
            <person name="Sun E."/>
            <person name="Svirskas R."/>
            <person name="Tector C."/>
            <person name="Turner R."/>
            <person name="Venter E."/>
            <person name="Wang A.H."/>
            <person name="Wang X."/>
            <person name="Wang Z.-Y."/>
            <person name="Wassarman D.A."/>
            <person name="Weinstock G.M."/>
            <person name="Weissenbach J."/>
            <person name="Williams S.M."/>
            <person name="Woodage T."/>
            <person name="Worley K.C."/>
            <person name="Wu D."/>
            <person name="Yang S."/>
            <person name="Yao Q.A."/>
            <person name="Ye J."/>
            <person name="Yeh R.-F."/>
            <person name="Zaveri J.S."/>
            <person name="Zhan M."/>
            <person name="Zhang G."/>
            <person name="Zhao Q."/>
            <person name="Zheng L."/>
            <person name="Zheng X.H."/>
            <person name="Zhong F.N."/>
            <person name="Zhong W."/>
            <person name="Zhou X."/>
            <person name="Zhu S.C."/>
            <person name="Zhu X."/>
            <person name="Smith H.O."/>
            <person name="Gibbs R.A."/>
            <person name="Myers E.W."/>
            <person name="Rubin G.M."/>
            <person name="Venter J.C."/>
        </authorList>
    </citation>
    <scope>NUCLEOTIDE SEQUENCE [LARGE SCALE GENOMIC DNA]</scope>
    <source>
        <strain>Berkeley</strain>
    </source>
</reference>
<reference key="2">
    <citation type="journal article" date="2002" name="Genome Biol.">
        <title>Annotation of the Drosophila melanogaster euchromatic genome: a systematic review.</title>
        <authorList>
            <person name="Misra S."/>
            <person name="Crosby M.A."/>
            <person name="Mungall C.J."/>
            <person name="Matthews B.B."/>
            <person name="Campbell K.S."/>
            <person name="Hradecky P."/>
            <person name="Huang Y."/>
            <person name="Kaminker J.S."/>
            <person name="Millburn G.H."/>
            <person name="Prochnik S.E."/>
            <person name="Smith C.D."/>
            <person name="Tupy J.L."/>
            <person name="Whitfield E.J."/>
            <person name="Bayraktaroglu L."/>
            <person name="Berman B.P."/>
            <person name="Bettencourt B.R."/>
            <person name="Celniker S.E."/>
            <person name="de Grey A.D.N.J."/>
            <person name="Drysdale R.A."/>
            <person name="Harris N.L."/>
            <person name="Richter J."/>
            <person name="Russo S."/>
            <person name="Schroeder A.J."/>
            <person name="Shu S.Q."/>
            <person name="Stapleton M."/>
            <person name="Yamada C."/>
            <person name="Ashburner M."/>
            <person name="Gelbart W.M."/>
            <person name="Rubin G.M."/>
            <person name="Lewis S.E."/>
        </authorList>
    </citation>
    <scope>GENOME REANNOTATION</scope>
    <source>
        <strain>Berkeley</strain>
    </source>
</reference>
<reference key="3">
    <citation type="journal article" date="2001" name="Curr. Biol.">
        <title>Spatially restricted expression of candidate taste receptors in the Drosophila gustatory system.</title>
        <authorList>
            <person name="Dunipace L."/>
            <person name="Meister S."/>
            <person name="McNealy C."/>
            <person name="Amrein H."/>
        </authorList>
    </citation>
    <scope>IDENTIFICATION</scope>
</reference>
<reference key="4">
    <citation type="journal article" date="2008" name="J. Comp. Neurol.">
        <title>Atypical expression of Drosophila gustatory receptor genes in sensory and central neurons.</title>
        <authorList>
            <person name="Thorne N."/>
            <person name="Amrein H."/>
        </authorList>
    </citation>
    <scope>TISSUE SPECIFICITY</scope>
    <scope>FUNCTION</scope>
</reference>
<reference key="5">
    <citation type="journal article" date="2011" name="J. Neurosci.">
        <title>Molecular and cellular organization of the taste system in the Drosophila larva.</title>
        <authorList>
            <person name="Kwon J.Y."/>
            <person name="Dahanukar A."/>
            <person name="Weiss L.A."/>
            <person name="Carlson J.R."/>
        </authorList>
    </citation>
    <scope>TISSUE SPECIFICITY</scope>
</reference>
<reference key="6">
    <citation type="journal article" date="2011" name="PLoS ONE">
        <title>Heterogeneous expression of Drosophila gustatory receptors in enteroendocrine cells.</title>
        <authorList>
            <person name="Park J.H."/>
            <person name="Kwon J.Y."/>
        </authorList>
    </citation>
    <scope>TISSUE SPECIFICITY</scope>
</reference>
<keyword id="KW-1003">Cell membrane</keyword>
<keyword id="KW-0325">Glycoprotein</keyword>
<keyword id="KW-0472">Membrane</keyword>
<keyword id="KW-0675">Receptor</keyword>
<keyword id="KW-1185">Reference proteome</keyword>
<keyword id="KW-0807">Transducer</keyword>
<keyword id="KW-0812">Transmembrane</keyword>
<keyword id="KW-1133">Transmembrane helix</keyword>
<feature type="chain" id="PRO_0000216501" description="Putative gustatory receptor 28a">
    <location>
        <begin position="1"/>
        <end position="450"/>
    </location>
</feature>
<feature type="topological domain" description="Cytoplasmic" evidence="1">
    <location>
        <begin position="1"/>
        <end position="47"/>
    </location>
</feature>
<feature type="transmembrane region" description="Helical; Name=1" evidence="2">
    <location>
        <begin position="48"/>
        <end position="68"/>
    </location>
</feature>
<feature type="topological domain" description="Extracellular" evidence="1">
    <location>
        <begin position="69"/>
        <end position="87"/>
    </location>
</feature>
<feature type="transmembrane region" description="Helical; Name=2" evidence="2">
    <location>
        <begin position="88"/>
        <end position="108"/>
    </location>
</feature>
<feature type="topological domain" description="Cytoplasmic" evidence="1">
    <location>
        <begin position="109"/>
        <end position="138"/>
    </location>
</feature>
<feature type="transmembrane region" description="Helical; Name=3" evidence="2">
    <location>
        <begin position="139"/>
        <end position="159"/>
    </location>
</feature>
<feature type="topological domain" description="Extracellular" evidence="1">
    <location>
        <begin position="160"/>
        <end position="171"/>
    </location>
</feature>
<feature type="transmembrane region" description="Helical; Name=4" evidence="2">
    <location>
        <begin position="172"/>
        <end position="192"/>
    </location>
</feature>
<feature type="topological domain" description="Cytoplasmic" evidence="1">
    <location>
        <begin position="193"/>
        <end position="292"/>
    </location>
</feature>
<feature type="transmembrane region" description="Helical; Name=5" evidence="2">
    <location>
        <begin position="293"/>
        <end position="313"/>
    </location>
</feature>
<feature type="topological domain" description="Extracellular" evidence="1">
    <location>
        <begin position="314"/>
        <end position="329"/>
    </location>
</feature>
<feature type="transmembrane region" description="Helical; Name=6" evidence="2">
    <location>
        <begin position="330"/>
        <end position="350"/>
    </location>
</feature>
<feature type="topological domain" description="Cytoplasmic" evidence="1">
    <location>
        <begin position="351"/>
        <end position="407"/>
    </location>
</feature>
<feature type="transmembrane region" description="Helical; Name=7" evidence="2">
    <location>
        <begin position="408"/>
        <end position="424"/>
    </location>
</feature>
<feature type="topological domain" description="Extracellular" evidence="1">
    <location>
        <begin position="425"/>
        <end position="450"/>
    </location>
</feature>
<feature type="glycosylation site" description="N-linked (GlcNAc...) asparagine" evidence="2">
    <location>
        <position position="82"/>
    </location>
</feature>
<feature type="glycosylation site" description="N-linked (GlcNAc...) asparagine" evidence="2">
    <location>
        <position position="438"/>
    </location>
</feature>